<keyword id="KW-0903">Direct protein sequencing</keyword>
<keyword id="KW-0472">Membrane</keyword>
<keyword id="KW-0496">Mitochondrion</keyword>
<keyword id="KW-0999">Mitochondrion inner membrane</keyword>
<keyword id="KW-0560">Oxidoreductase</keyword>
<keyword id="KW-1185">Reference proteome</keyword>
<keyword id="KW-0812">Transmembrane</keyword>
<keyword id="KW-1133">Transmembrane helix</keyword>
<feature type="chain" id="PRO_0000193446" description="Cytochrome c oxidase subunit 6A2, mitochondrial">
    <location>
        <begin position="1"/>
        <end position="19" status="greater than"/>
    </location>
</feature>
<feature type="non-terminal residue">
    <location>
        <position position="19"/>
    </location>
</feature>
<dbReference type="UniPathway" id="UPA00705"/>
<dbReference type="Proteomes" id="UP000002356">
    <property type="component" value="Unplaced"/>
</dbReference>
<dbReference type="GO" id="GO:0005743">
    <property type="term" value="C:mitochondrial inner membrane"/>
    <property type="evidence" value="ECO:0007669"/>
    <property type="project" value="UniProtKB-SubCell"/>
</dbReference>
<dbReference type="GO" id="GO:0016491">
    <property type="term" value="F:oxidoreductase activity"/>
    <property type="evidence" value="ECO:0007669"/>
    <property type="project" value="UniProtKB-KW"/>
</dbReference>
<dbReference type="GO" id="GO:0006119">
    <property type="term" value="P:oxidative phosphorylation"/>
    <property type="evidence" value="ECO:0007669"/>
    <property type="project" value="UniProtKB-UniPathway"/>
</dbReference>
<organism>
    <name type="scientific">Ovis aries</name>
    <name type="common">Sheep</name>
    <dbReference type="NCBI Taxonomy" id="9940"/>
    <lineage>
        <taxon>Eukaryota</taxon>
        <taxon>Metazoa</taxon>
        <taxon>Chordata</taxon>
        <taxon>Craniata</taxon>
        <taxon>Vertebrata</taxon>
        <taxon>Euteleostomi</taxon>
        <taxon>Mammalia</taxon>
        <taxon>Eutheria</taxon>
        <taxon>Laurasiatheria</taxon>
        <taxon>Artiodactyla</taxon>
        <taxon>Ruminantia</taxon>
        <taxon>Pecora</taxon>
        <taxon>Bovidae</taxon>
        <taxon>Caprinae</taxon>
        <taxon>Ovis</taxon>
    </lineage>
</organism>
<comment type="function">
    <text evidence="2 3">Component of the cytochrome c oxidase, the last enzyme in the mitochondrial electron transport chain which drives oxidative phosphorylation. The respiratory chain contains 3 multisubunit complexes succinate dehydrogenase (complex II, CII), ubiquinol-cytochrome c oxidoreductase (cytochrome b-c1 complex, complex III, CIII) and cytochrome c oxidase (complex IV, CIV), that cooperate to transfer electrons derived from NADH and succinate to molecular oxygen, creating an electrochemical gradient over the inner membrane that drives transmembrane transport and the ATP synthase. Cytochrome c oxidase is the component of the respiratory chain that catalyzes the reduction of oxygen to water. Electrons originating from reduced cytochrome c in the intermembrane space (IMS) are transferred via the dinuclear copper A center (CU(A)) of subunit 2 and heme A of subunit 1 to the active site in subunit 1, a binuclear center (BNC) formed by heme A3 and copper B (CU(B)). The BNC reduces molecular oxygen to 2 water molecules unsing 4 electrons from cytochrome c in the IMS and 4 protons from the mitochondrial matrix. Plays a role in the assembly and stabilization of complex IV (By similarity).</text>
</comment>
<comment type="pathway">
    <text evidence="2">Energy metabolism; oxidative phosphorylation.</text>
</comment>
<comment type="subunit">
    <text evidence="1">Component of the cytochrome c oxidase (complex IV, CIV), a multisubunit enzyme composed of 14 subunits. The complex is composed of a catalytic core of 3 subunits MT-CO1, MT-CO2 and MT-CO3, encoded in the mitochondrial DNA, and 11 supernumerary subunits COX4I, COX5A, COX5B, COX6A, COX6B, COX6C, COX7A, COX7B, COX7C, COX8 and NDUFA4, which are encoded in the nuclear genome. The complex exists as a monomer or a dimer and forms supercomplexes (SCs) in the inner mitochondrial membrane with NADH-ubiquinone oxidoreductase (complex I, CI) and ubiquinol-cytochrome c oxidoreductase (cytochrome b-c1 complex, complex III, CIII), resulting in different assemblies (supercomplex SCI(1)III(2)IV(1) and megacomplex MCI(2)III(2)IV(2)).</text>
</comment>
<comment type="subcellular location">
    <subcellularLocation>
        <location evidence="1">Mitochondrion inner membrane</location>
        <topology evidence="1">Single-pass membrane protein</topology>
    </subcellularLocation>
</comment>
<comment type="tissue specificity">
    <text>Heart specific isoform.</text>
</comment>
<comment type="similarity">
    <text evidence="4">Belongs to the cytochrome c oxidase subunit 6A family.</text>
</comment>
<proteinExistence type="evidence at protein level"/>
<gene>
    <name type="primary">COX6A2</name>
</gene>
<sequence length="19" mass="1825">ASAAKGEHGGXGAATLRFL</sequence>
<reference key="1">
    <citation type="journal article" date="1995" name="Comp. Biochem. Physiol.">
        <title>Species-specific expression of cytochrome c oxidase isozymes.</title>
        <authorList>
            <person name="Linder D."/>
            <person name="Freund R."/>
            <person name="Kadenbach B."/>
        </authorList>
    </citation>
    <scope>PROTEIN SEQUENCE</scope>
    <source>
        <tissue>Heart</tissue>
    </source>
</reference>
<evidence type="ECO:0000250" key="1">
    <source>
        <dbReference type="UniProtKB" id="P07471"/>
    </source>
</evidence>
<evidence type="ECO:0000250" key="2">
    <source>
        <dbReference type="UniProtKB" id="P32799"/>
    </source>
</evidence>
<evidence type="ECO:0000250" key="3">
    <source>
        <dbReference type="UniProtKB" id="P43023"/>
    </source>
</evidence>
<evidence type="ECO:0000305" key="4"/>
<accession>P61901</accession>
<accession>Q9TR32</accession>
<protein>
    <recommendedName>
        <fullName>Cytochrome c oxidase subunit 6A2, mitochondrial</fullName>
    </recommendedName>
    <alternativeName>
        <fullName>Cytochrome c oxidase polypeptide VIa-heart</fullName>
        <shortName>COXVIAH</shortName>
    </alternativeName>
</protein>
<name>CX6A2_SHEEP</name>